<protein>
    <recommendedName>
        <fullName evidence="1">Regulatory protein RecX</fullName>
    </recommendedName>
</protein>
<evidence type="ECO:0000255" key="1">
    <source>
        <dbReference type="HAMAP-Rule" id="MF_01114"/>
    </source>
</evidence>
<evidence type="ECO:0000256" key="2">
    <source>
        <dbReference type="SAM" id="MobiDB-lite"/>
    </source>
</evidence>
<proteinExistence type="inferred from homology"/>
<organism>
    <name type="scientific">Corynebacterium efficiens (strain DSM 44549 / YS-314 / AJ 12310 / JCM 11189 / NBRC 100395)</name>
    <dbReference type="NCBI Taxonomy" id="196164"/>
    <lineage>
        <taxon>Bacteria</taxon>
        <taxon>Bacillati</taxon>
        <taxon>Actinomycetota</taxon>
        <taxon>Actinomycetes</taxon>
        <taxon>Mycobacteriales</taxon>
        <taxon>Corynebacteriaceae</taxon>
        <taxon>Corynebacterium</taxon>
    </lineage>
</organism>
<comment type="function">
    <text evidence="1">Modulates RecA activity.</text>
</comment>
<comment type="subcellular location">
    <subcellularLocation>
        <location evidence="1">Cytoplasm</location>
    </subcellularLocation>
</comment>
<comment type="similarity">
    <text evidence="1">Belongs to the RecX family.</text>
</comment>
<sequence length="210" mass="24022">MTDPITPHPGENQAAKLEKLRTALEEFSRRQEEGAASSLFDREAEEKKAEVRRRALLLLDQRARSRSELQGRLGALDFDHDIIEEVLDDLTRANLINDESFAQEWVRQRAQRRGKSTRVLDRELRDKGVDAGIRARALEQIDPEDERDTARAVAVKKARSESRIPADRSDYDKALRRVVGALARRGFPAGMSMDLAREALDERIEDLRQH</sequence>
<accession>Q8FPD4</accession>
<name>RECX_COREF</name>
<feature type="chain" id="PRO_0000162426" description="Regulatory protein RecX">
    <location>
        <begin position="1"/>
        <end position="210"/>
    </location>
</feature>
<feature type="region of interest" description="Disordered" evidence="2">
    <location>
        <begin position="28"/>
        <end position="47"/>
    </location>
</feature>
<keyword id="KW-0963">Cytoplasm</keyword>
<keyword id="KW-1185">Reference proteome</keyword>
<reference key="1">
    <citation type="journal article" date="2003" name="Genome Res.">
        <title>Comparative complete genome sequence analysis of the amino acid replacements responsible for the thermostability of Corynebacterium efficiens.</title>
        <authorList>
            <person name="Nishio Y."/>
            <person name="Nakamura Y."/>
            <person name="Kawarabayasi Y."/>
            <person name="Usuda Y."/>
            <person name="Kimura E."/>
            <person name="Sugimoto S."/>
            <person name="Matsui K."/>
            <person name="Yamagishi A."/>
            <person name="Kikuchi H."/>
            <person name="Ikeo K."/>
            <person name="Gojobori T."/>
        </authorList>
    </citation>
    <scope>NUCLEOTIDE SEQUENCE [LARGE SCALE GENOMIC DNA]</scope>
    <source>
        <strain>DSM 44549 / YS-314 / AJ 12310 / JCM 11189 / NBRC 100395</strain>
    </source>
</reference>
<dbReference type="EMBL" id="BA000035">
    <property type="protein sequence ID" value="BAC18658.1"/>
    <property type="molecule type" value="Genomic_DNA"/>
</dbReference>
<dbReference type="RefSeq" id="WP_006767847.1">
    <property type="nucleotide sequence ID" value="NC_004369.1"/>
</dbReference>
<dbReference type="SMR" id="Q8FPD4"/>
<dbReference type="STRING" id="196164.gene:10742276"/>
<dbReference type="KEGG" id="cef:CE1848"/>
<dbReference type="eggNOG" id="COG2137">
    <property type="taxonomic scope" value="Bacteria"/>
</dbReference>
<dbReference type="HOGENOM" id="CLU_066607_0_2_11"/>
<dbReference type="OrthoDB" id="5244465at2"/>
<dbReference type="Proteomes" id="UP000001409">
    <property type="component" value="Chromosome"/>
</dbReference>
<dbReference type="GO" id="GO:0005737">
    <property type="term" value="C:cytoplasm"/>
    <property type="evidence" value="ECO:0007669"/>
    <property type="project" value="UniProtKB-SubCell"/>
</dbReference>
<dbReference type="GO" id="GO:0006282">
    <property type="term" value="P:regulation of DNA repair"/>
    <property type="evidence" value="ECO:0007669"/>
    <property type="project" value="UniProtKB-UniRule"/>
</dbReference>
<dbReference type="Gene3D" id="1.10.10.10">
    <property type="entry name" value="Winged helix-like DNA-binding domain superfamily/Winged helix DNA-binding domain"/>
    <property type="match status" value="2"/>
</dbReference>
<dbReference type="HAMAP" id="MF_01114">
    <property type="entry name" value="RecX"/>
    <property type="match status" value="1"/>
</dbReference>
<dbReference type="InterPro" id="IPR053926">
    <property type="entry name" value="RecX_HTH_1st"/>
</dbReference>
<dbReference type="InterPro" id="IPR053924">
    <property type="entry name" value="RecX_HTH_2nd"/>
</dbReference>
<dbReference type="InterPro" id="IPR003783">
    <property type="entry name" value="Regulatory_RecX"/>
</dbReference>
<dbReference type="InterPro" id="IPR036388">
    <property type="entry name" value="WH-like_DNA-bd_sf"/>
</dbReference>
<dbReference type="NCBIfam" id="NF001059">
    <property type="entry name" value="PRK00117.4-3"/>
    <property type="match status" value="1"/>
</dbReference>
<dbReference type="PANTHER" id="PTHR33602">
    <property type="entry name" value="REGULATORY PROTEIN RECX FAMILY PROTEIN"/>
    <property type="match status" value="1"/>
</dbReference>
<dbReference type="PANTHER" id="PTHR33602:SF1">
    <property type="entry name" value="REGULATORY PROTEIN RECX FAMILY PROTEIN"/>
    <property type="match status" value="1"/>
</dbReference>
<dbReference type="Pfam" id="PF21982">
    <property type="entry name" value="RecX_HTH1"/>
    <property type="match status" value="1"/>
</dbReference>
<dbReference type="Pfam" id="PF02631">
    <property type="entry name" value="RecX_HTH2"/>
    <property type="match status" value="1"/>
</dbReference>
<gene>
    <name evidence="1" type="primary">recX</name>
    <name type="ordered locus">CE1848</name>
</gene>